<proteinExistence type="inferred from homology"/>
<dbReference type="EMBL" id="CP000350">
    <property type="protein sequence ID" value="ABJ76942.1"/>
    <property type="molecule type" value="Genomic_DNA"/>
</dbReference>
<dbReference type="RefSeq" id="WP_011669549.1">
    <property type="nucleotide sequence ID" value="NC_008510.1"/>
</dbReference>
<dbReference type="SMR" id="Q04Q78"/>
<dbReference type="GeneID" id="61173137"/>
<dbReference type="KEGG" id="lbj:LBJ_2505"/>
<dbReference type="HOGENOM" id="CLU_087843_3_0_12"/>
<dbReference type="Proteomes" id="UP000000656">
    <property type="component" value="Chromosome 1"/>
</dbReference>
<dbReference type="GO" id="GO:0005829">
    <property type="term" value="C:cytosol"/>
    <property type="evidence" value="ECO:0007669"/>
    <property type="project" value="TreeGrafter"/>
</dbReference>
<dbReference type="GO" id="GO:0003723">
    <property type="term" value="F:RNA binding"/>
    <property type="evidence" value="ECO:0007669"/>
    <property type="project" value="UniProtKB-UniRule"/>
</dbReference>
<dbReference type="GO" id="GO:0006353">
    <property type="term" value="P:DNA-templated transcription termination"/>
    <property type="evidence" value="ECO:0007669"/>
    <property type="project" value="UniProtKB-UniRule"/>
</dbReference>
<dbReference type="GO" id="GO:0031564">
    <property type="term" value="P:transcription antitermination"/>
    <property type="evidence" value="ECO:0007669"/>
    <property type="project" value="UniProtKB-KW"/>
</dbReference>
<dbReference type="CDD" id="cd00619">
    <property type="entry name" value="Terminator_NusB"/>
    <property type="match status" value="1"/>
</dbReference>
<dbReference type="FunFam" id="1.10.940.10:FF:000013">
    <property type="entry name" value="Transcription antitermination protein NusB"/>
    <property type="match status" value="1"/>
</dbReference>
<dbReference type="Gene3D" id="1.10.940.10">
    <property type="entry name" value="NusB-like"/>
    <property type="match status" value="1"/>
</dbReference>
<dbReference type="HAMAP" id="MF_00073">
    <property type="entry name" value="NusB"/>
    <property type="match status" value="1"/>
</dbReference>
<dbReference type="InterPro" id="IPR035926">
    <property type="entry name" value="NusB-like_sf"/>
</dbReference>
<dbReference type="InterPro" id="IPR011605">
    <property type="entry name" value="NusB_fam"/>
</dbReference>
<dbReference type="InterPro" id="IPR006027">
    <property type="entry name" value="NusB_RsmB_TIM44"/>
</dbReference>
<dbReference type="NCBIfam" id="TIGR01951">
    <property type="entry name" value="nusB"/>
    <property type="match status" value="1"/>
</dbReference>
<dbReference type="PANTHER" id="PTHR11078:SF3">
    <property type="entry name" value="ANTITERMINATION NUSB DOMAIN-CONTAINING PROTEIN"/>
    <property type="match status" value="1"/>
</dbReference>
<dbReference type="PANTHER" id="PTHR11078">
    <property type="entry name" value="N UTILIZATION SUBSTANCE PROTEIN B-RELATED"/>
    <property type="match status" value="1"/>
</dbReference>
<dbReference type="Pfam" id="PF01029">
    <property type="entry name" value="NusB"/>
    <property type="match status" value="1"/>
</dbReference>
<dbReference type="SUPFAM" id="SSF48013">
    <property type="entry name" value="NusB-like"/>
    <property type="match status" value="1"/>
</dbReference>
<feature type="chain" id="PRO_1000023743" description="Transcription antitermination protein NusB">
    <location>
        <begin position="1"/>
        <end position="138"/>
    </location>
</feature>
<name>NUSB_LEPBJ</name>
<comment type="function">
    <text evidence="1">Involved in transcription antitermination. Required for transcription of ribosomal RNA (rRNA) genes. Binds specifically to the boxA antiterminator sequence of the ribosomal RNA (rrn) operons.</text>
</comment>
<comment type="similarity">
    <text evidence="1">Belongs to the NusB family.</text>
</comment>
<organism>
    <name type="scientific">Leptospira borgpetersenii serovar Hardjo-bovis (strain JB197)</name>
    <dbReference type="NCBI Taxonomy" id="355277"/>
    <lineage>
        <taxon>Bacteria</taxon>
        <taxon>Pseudomonadati</taxon>
        <taxon>Spirochaetota</taxon>
        <taxon>Spirochaetia</taxon>
        <taxon>Leptospirales</taxon>
        <taxon>Leptospiraceae</taxon>
        <taxon>Leptospira</taxon>
    </lineage>
</organism>
<sequence>MSARRTSREIAVMALYQLELTGPPLKEVLKFKWYDKKTEPEERDFAVSIVNGVVKNQEQIDTLIKKYSKNWDFSRISIVNKAILRLSVFALLYSWEVPKNVTIDEAVELTKEFESEESARFVNGILDAILKNETKSDG</sequence>
<reference key="1">
    <citation type="journal article" date="2006" name="Proc. Natl. Acad. Sci. U.S.A.">
        <title>Genome reduction in Leptospira borgpetersenii reflects limited transmission potential.</title>
        <authorList>
            <person name="Bulach D.M."/>
            <person name="Zuerner R.L."/>
            <person name="Wilson P."/>
            <person name="Seemann T."/>
            <person name="McGrath A."/>
            <person name="Cullen P.A."/>
            <person name="Davis J."/>
            <person name="Johnson M."/>
            <person name="Kuczek E."/>
            <person name="Alt D.P."/>
            <person name="Peterson-Burch B."/>
            <person name="Coppel R.L."/>
            <person name="Rood J.I."/>
            <person name="Davies J.K."/>
            <person name="Adler B."/>
        </authorList>
    </citation>
    <scope>NUCLEOTIDE SEQUENCE [LARGE SCALE GENOMIC DNA]</scope>
    <source>
        <strain>JB197</strain>
    </source>
</reference>
<accession>Q04Q78</accession>
<gene>
    <name evidence="1" type="primary">nusB</name>
    <name type="ordered locus">LBJ_2505</name>
</gene>
<evidence type="ECO:0000255" key="1">
    <source>
        <dbReference type="HAMAP-Rule" id="MF_00073"/>
    </source>
</evidence>
<keyword id="KW-0694">RNA-binding</keyword>
<keyword id="KW-0804">Transcription</keyword>
<keyword id="KW-0889">Transcription antitermination</keyword>
<keyword id="KW-0805">Transcription regulation</keyword>
<protein>
    <recommendedName>
        <fullName evidence="1">Transcription antitermination protein NusB</fullName>
    </recommendedName>
    <alternativeName>
        <fullName evidence="1">Antitermination factor NusB</fullName>
    </alternativeName>
</protein>